<gene>
    <name evidence="1" type="primary">rplO</name>
    <name type="ordered locus">Mpop_2145</name>
</gene>
<feature type="chain" id="PRO_1000142841" description="Large ribosomal subunit protein uL15">
    <location>
        <begin position="1"/>
        <end position="169"/>
    </location>
</feature>
<feature type="region of interest" description="Disordered" evidence="2">
    <location>
        <begin position="1"/>
        <end position="40"/>
    </location>
</feature>
<feature type="compositionally biased region" description="Basic and acidic residues" evidence="2">
    <location>
        <begin position="1"/>
        <end position="13"/>
    </location>
</feature>
<feature type="compositionally biased region" description="Gly residues" evidence="2">
    <location>
        <begin position="21"/>
        <end position="35"/>
    </location>
</feature>
<evidence type="ECO:0000255" key="1">
    <source>
        <dbReference type="HAMAP-Rule" id="MF_01341"/>
    </source>
</evidence>
<evidence type="ECO:0000256" key="2">
    <source>
        <dbReference type="SAM" id="MobiDB-lite"/>
    </source>
</evidence>
<evidence type="ECO:0000305" key="3"/>
<sequence>MKLNEIRDNEGATKNRMRVGRGIGSGKGKTGGRGVKGQKARTGVSIKGFEGGQMPLHRRLPKRGFNNIHAHDLNEVNLGRVQAAVDAGKLDANAPVTVDALVKAGIIARARDGVKLLGVGELTAKLSFEVTRASKSAVEAVEKAGGSVTTTFAAGVAHRGASEGAVASA</sequence>
<reference key="1">
    <citation type="submission" date="2008-04" db="EMBL/GenBank/DDBJ databases">
        <title>Complete sequence of chromosome of Methylobacterium populi BJ001.</title>
        <authorList>
            <consortium name="US DOE Joint Genome Institute"/>
            <person name="Copeland A."/>
            <person name="Lucas S."/>
            <person name="Lapidus A."/>
            <person name="Glavina del Rio T."/>
            <person name="Dalin E."/>
            <person name="Tice H."/>
            <person name="Bruce D."/>
            <person name="Goodwin L."/>
            <person name="Pitluck S."/>
            <person name="Chertkov O."/>
            <person name="Brettin T."/>
            <person name="Detter J.C."/>
            <person name="Han C."/>
            <person name="Kuske C.R."/>
            <person name="Schmutz J."/>
            <person name="Larimer F."/>
            <person name="Land M."/>
            <person name="Hauser L."/>
            <person name="Kyrpides N."/>
            <person name="Mikhailova N."/>
            <person name="Marx C."/>
            <person name="Richardson P."/>
        </authorList>
    </citation>
    <scope>NUCLEOTIDE SEQUENCE [LARGE SCALE GENOMIC DNA]</scope>
    <source>
        <strain>ATCC BAA-705 / NCIMB 13946 / BJ001</strain>
    </source>
</reference>
<accession>B1Z774</accession>
<proteinExistence type="inferred from homology"/>
<dbReference type="EMBL" id="CP001029">
    <property type="protein sequence ID" value="ACB80307.1"/>
    <property type="molecule type" value="Genomic_DNA"/>
</dbReference>
<dbReference type="RefSeq" id="WP_012454043.1">
    <property type="nucleotide sequence ID" value="NC_010725.1"/>
</dbReference>
<dbReference type="SMR" id="B1Z774"/>
<dbReference type="STRING" id="441620.Mpop_2145"/>
<dbReference type="KEGG" id="mpo:Mpop_2145"/>
<dbReference type="eggNOG" id="COG0200">
    <property type="taxonomic scope" value="Bacteria"/>
</dbReference>
<dbReference type="HOGENOM" id="CLU_055188_4_0_5"/>
<dbReference type="OrthoDB" id="9810293at2"/>
<dbReference type="Proteomes" id="UP000007136">
    <property type="component" value="Chromosome"/>
</dbReference>
<dbReference type="GO" id="GO:0022625">
    <property type="term" value="C:cytosolic large ribosomal subunit"/>
    <property type="evidence" value="ECO:0007669"/>
    <property type="project" value="TreeGrafter"/>
</dbReference>
<dbReference type="GO" id="GO:0019843">
    <property type="term" value="F:rRNA binding"/>
    <property type="evidence" value="ECO:0007669"/>
    <property type="project" value="UniProtKB-UniRule"/>
</dbReference>
<dbReference type="GO" id="GO:0003735">
    <property type="term" value="F:structural constituent of ribosome"/>
    <property type="evidence" value="ECO:0007669"/>
    <property type="project" value="InterPro"/>
</dbReference>
<dbReference type="GO" id="GO:0006412">
    <property type="term" value="P:translation"/>
    <property type="evidence" value="ECO:0007669"/>
    <property type="project" value="UniProtKB-UniRule"/>
</dbReference>
<dbReference type="Gene3D" id="3.100.10.10">
    <property type="match status" value="1"/>
</dbReference>
<dbReference type="HAMAP" id="MF_01341">
    <property type="entry name" value="Ribosomal_uL15"/>
    <property type="match status" value="1"/>
</dbReference>
<dbReference type="InterPro" id="IPR030878">
    <property type="entry name" value="Ribosomal_uL15"/>
</dbReference>
<dbReference type="InterPro" id="IPR021131">
    <property type="entry name" value="Ribosomal_uL15/eL18"/>
</dbReference>
<dbReference type="InterPro" id="IPR036227">
    <property type="entry name" value="Ribosomal_uL15/eL18_sf"/>
</dbReference>
<dbReference type="InterPro" id="IPR005749">
    <property type="entry name" value="Ribosomal_uL15_bac-type"/>
</dbReference>
<dbReference type="InterPro" id="IPR001196">
    <property type="entry name" value="Ribosomal_uL15_CS"/>
</dbReference>
<dbReference type="NCBIfam" id="TIGR01071">
    <property type="entry name" value="rplO_bact"/>
    <property type="match status" value="1"/>
</dbReference>
<dbReference type="PANTHER" id="PTHR12934">
    <property type="entry name" value="50S RIBOSOMAL PROTEIN L15"/>
    <property type="match status" value="1"/>
</dbReference>
<dbReference type="PANTHER" id="PTHR12934:SF11">
    <property type="entry name" value="LARGE RIBOSOMAL SUBUNIT PROTEIN UL15M"/>
    <property type="match status" value="1"/>
</dbReference>
<dbReference type="Pfam" id="PF00828">
    <property type="entry name" value="Ribosomal_L27A"/>
    <property type="match status" value="1"/>
</dbReference>
<dbReference type="SUPFAM" id="SSF52080">
    <property type="entry name" value="Ribosomal proteins L15p and L18e"/>
    <property type="match status" value="1"/>
</dbReference>
<dbReference type="PROSITE" id="PS00475">
    <property type="entry name" value="RIBOSOMAL_L15"/>
    <property type="match status" value="1"/>
</dbReference>
<protein>
    <recommendedName>
        <fullName evidence="1">Large ribosomal subunit protein uL15</fullName>
    </recommendedName>
    <alternativeName>
        <fullName evidence="3">50S ribosomal protein L15</fullName>
    </alternativeName>
</protein>
<keyword id="KW-0687">Ribonucleoprotein</keyword>
<keyword id="KW-0689">Ribosomal protein</keyword>
<keyword id="KW-0694">RNA-binding</keyword>
<keyword id="KW-0699">rRNA-binding</keyword>
<organism>
    <name type="scientific">Methylorubrum populi (strain ATCC BAA-705 / NCIMB 13946 / BJ001)</name>
    <name type="common">Methylobacterium populi</name>
    <dbReference type="NCBI Taxonomy" id="441620"/>
    <lineage>
        <taxon>Bacteria</taxon>
        <taxon>Pseudomonadati</taxon>
        <taxon>Pseudomonadota</taxon>
        <taxon>Alphaproteobacteria</taxon>
        <taxon>Hyphomicrobiales</taxon>
        <taxon>Methylobacteriaceae</taxon>
        <taxon>Methylorubrum</taxon>
    </lineage>
</organism>
<name>RL15_METPB</name>
<comment type="function">
    <text evidence="1">Binds to the 23S rRNA.</text>
</comment>
<comment type="subunit">
    <text evidence="1">Part of the 50S ribosomal subunit.</text>
</comment>
<comment type="similarity">
    <text evidence="1">Belongs to the universal ribosomal protein uL15 family.</text>
</comment>